<evidence type="ECO:0000255" key="1">
    <source>
        <dbReference type="HAMAP-Rule" id="MF_01575"/>
    </source>
</evidence>
<sequence length="184" mass="21625">MKVIAVTGYKPFELGIFKNDHPGVECIKKALHRKLLTFVEDGLEWVIISGQLGVELWAAEVVFEMQVEYPDLKLAVFTPFLEQEENWKEDNREYYEFILSQADHVDSITKRKYESPEQFKLKNQFFIEKSDALLAVYDEEKPGSPKYIVESAKKKGEIENYHSYFILFSDLQDIIEEEQWNNAE</sequence>
<name>Y1614_BACC4</name>
<comment type="similarity">
    <text evidence="1">Belongs to the UPF0398 family.</text>
</comment>
<gene>
    <name type="ordered locus">BCB4264_A1614</name>
</gene>
<organism>
    <name type="scientific">Bacillus cereus (strain B4264)</name>
    <dbReference type="NCBI Taxonomy" id="405532"/>
    <lineage>
        <taxon>Bacteria</taxon>
        <taxon>Bacillati</taxon>
        <taxon>Bacillota</taxon>
        <taxon>Bacilli</taxon>
        <taxon>Bacillales</taxon>
        <taxon>Bacillaceae</taxon>
        <taxon>Bacillus</taxon>
        <taxon>Bacillus cereus group</taxon>
    </lineage>
</organism>
<dbReference type="EMBL" id="CP001176">
    <property type="protein sequence ID" value="ACK61665.1"/>
    <property type="molecule type" value="Genomic_DNA"/>
</dbReference>
<dbReference type="RefSeq" id="WP_000862910.1">
    <property type="nucleotide sequence ID" value="NC_011725.1"/>
</dbReference>
<dbReference type="SMR" id="B7HHW2"/>
<dbReference type="KEGG" id="bcb:BCB4264_A1614"/>
<dbReference type="HOGENOM" id="CLU_105319_0_0_9"/>
<dbReference type="Proteomes" id="UP000007096">
    <property type="component" value="Chromosome"/>
</dbReference>
<dbReference type="Gene3D" id="3.40.50.450">
    <property type="match status" value="1"/>
</dbReference>
<dbReference type="HAMAP" id="MF_01575">
    <property type="entry name" value="UPF0398"/>
    <property type="match status" value="1"/>
</dbReference>
<dbReference type="InterPro" id="IPR010697">
    <property type="entry name" value="YspA"/>
</dbReference>
<dbReference type="NCBIfam" id="NF010181">
    <property type="entry name" value="PRK13660.1"/>
    <property type="match status" value="1"/>
</dbReference>
<dbReference type="PANTHER" id="PTHR38440:SF1">
    <property type="entry name" value="UPF0398 PROTEIN SPR0331"/>
    <property type="match status" value="1"/>
</dbReference>
<dbReference type="PANTHER" id="PTHR38440">
    <property type="entry name" value="UPF0398 PROTEIN YPSA"/>
    <property type="match status" value="1"/>
</dbReference>
<dbReference type="Pfam" id="PF06908">
    <property type="entry name" value="YpsA"/>
    <property type="match status" value="1"/>
</dbReference>
<dbReference type="PIRSF" id="PIRSF021290">
    <property type="entry name" value="DUF1273"/>
    <property type="match status" value="1"/>
</dbReference>
<dbReference type="SUPFAM" id="SSF102405">
    <property type="entry name" value="MCP/YpsA-like"/>
    <property type="match status" value="1"/>
</dbReference>
<proteinExistence type="inferred from homology"/>
<accession>B7HHW2</accession>
<protein>
    <recommendedName>
        <fullName evidence="1">UPF0398 protein BCB4264_A1614</fullName>
    </recommendedName>
</protein>
<feature type="chain" id="PRO_1000200768" description="UPF0398 protein BCB4264_A1614">
    <location>
        <begin position="1"/>
        <end position="184"/>
    </location>
</feature>
<reference key="1">
    <citation type="submission" date="2008-10" db="EMBL/GenBank/DDBJ databases">
        <title>Genome sequence of Bacillus cereus B4264.</title>
        <authorList>
            <person name="Dodson R.J."/>
            <person name="Durkin A.S."/>
            <person name="Rosovitz M.J."/>
            <person name="Rasko D.A."/>
            <person name="Hoffmaster A."/>
            <person name="Ravel J."/>
            <person name="Sutton G."/>
        </authorList>
    </citation>
    <scope>NUCLEOTIDE SEQUENCE [LARGE SCALE GENOMIC DNA]</scope>
    <source>
        <strain>B4264</strain>
    </source>
</reference>